<protein>
    <recommendedName>
        <fullName>Cystatin-B</fullName>
    </recommendedName>
    <alternativeName>
        <fullName>Stefin-B</fullName>
    </alternativeName>
</protein>
<comment type="function">
    <text evidence="1">This is an intracellular thiol proteinase inhibitor. Tightly binding reversible inhibitor of cathepsins L, H and B (By similarity).</text>
</comment>
<comment type="subunit">
    <text evidence="1">Able to form dimers stabilized by noncovalent forces.</text>
</comment>
<comment type="subcellular location">
    <subcellularLocation>
        <location evidence="1">Cytoplasm</location>
    </subcellularLocation>
    <subcellularLocation>
        <location evidence="1">Nucleus</location>
    </subcellularLocation>
</comment>
<comment type="similarity">
    <text evidence="3">Belongs to the cystatin family.</text>
</comment>
<name>CYTB_GORGO</name>
<reference key="1">
    <citation type="journal article" date="2003" name="Genomics">
        <title>Evolution of the cystatin B gene: implications for the origin of its variable dodecamer tandem repeat in humans.</title>
        <authorList>
            <person name="Osawa M."/>
            <person name="Kaneko M."/>
            <person name="Horiuchi H."/>
            <person name="Kitano T."/>
            <person name="Kawamoto Y."/>
            <person name="Saitou N."/>
            <person name="Umetsu K."/>
        </authorList>
    </citation>
    <scope>NUCLEOTIDE SEQUENCE [GENOMIC DNA]</scope>
</reference>
<sequence length="98" mass="11140">MMCGAPSATQPATAETQHIADQVRSQLEEKENKKFPVFKAVSFKSQVVAGTNYFIKVHVGDEDFVHLRVFQSLPHENKPLTLSNYQTNKAKHDELTYF</sequence>
<proteinExistence type="inferred from homology"/>
<keyword id="KW-0007">Acetylation</keyword>
<keyword id="KW-0963">Cytoplasm</keyword>
<keyword id="KW-0539">Nucleus</keyword>
<keyword id="KW-0646">Protease inhibitor</keyword>
<keyword id="KW-1185">Reference proteome</keyword>
<keyword id="KW-0789">Thiol protease inhibitor</keyword>
<organism>
    <name type="scientific">Gorilla gorilla gorilla</name>
    <name type="common">Western lowland gorilla</name>
    <dbReference type="NCBI Taxonomy" id="9595"/>
    <lineage>
        <taxon>Eukaryota</taxon>
        <taxon>Metazoa</taxon>
        <taxon>Chordata</taxon>
        <taxon>Craniata</taxon>
        <taxon>Vertebrata</taxon>
        <taxon>Euteleostomi</taxon>
        <taxon>Mammalia</taxon>
        <taxon>Eutheria</taxon>
        <taxon>Euarchontoglires</taxon>
        <taxon>Primates</taxon>
        <taxon>Haplorrhini</taxon>
        <taxon>Catarrhini</taxon>
        <taxon>Hominidae</taxon>
        <taxon>Gorilla</taxon>
    </lineage>
</organism>
<evidence type="ECO:0000250" key="1"/>
<evidence type="ECO:0000250" key="2">
    <source>
        <dbReference type="UniProtKB" id="P25417"/>
    </source>
</evidence>
<evidence type="ECO:0000305" key="3"/>
<gene>
    <name type="primary">CSTB</name>
    <name type="synonym">STFB</name>
</gene>
<accession>Q76LA0</accession>
<feature type="chain" id="PRO_0000207135" description="Cystatin-B">
    <location>
        <begin position="1"/>
        <end position="98"/>
    </location>
</feature>
<feature type="short sequence motif" description="Secondary area of contact" evidence="1">
    <location>
        <begin position="46"/>
        <end position="50"/>
    </location>
</feature>
<feature type="site" description="Reactive site" evidence="1">
    <location>
        <position position="4"/>
    </location>
</feature>
<feature type="modified residue" description="N-acetylmethionine" evidence="2 3">
    <location>
        <position position="1"/>
    </location>
</feature>
<dbReference type="EMBL" id="AB083088">
    <property type="protein sequence ID" value="BAC20307.1"/>
    <property type="molecule type" value="Genomic_DNA"/>
</dbReference>
<dbReference type="RefSeq" id="XP_030860991.1">
    <property type="nucleotide sequence ID" value="XM_031005131.3"/>
</dbReference>
<dbReference type="BMRB" id="Q76LA0"/>
<dbReference type="SMR" id="Q76LA0"/>
<dbReference type="FunCoup" id="Q76LA0">
    <property type="interactions" value="490"/>
</dbReference>
<dbReference type="STRING" id="9593.ENSGGOP00000003834"/>
<dbReference type="MEROPS" id="I25.003"/>
<dbReference type="GeneID" id="101127879"/>
<dbReference type="InParanoid" id="Q76LA0"/>
<dbReference type="Proteomes" id="UP000001519">
    <property type="component" value="Unplaced"/>
</dbReference>
<dbReference type="GO" id="GO:0005829">
    <property type="term" value="C:cytosol"/>
    <property type="evidence" value="ECO:0000318"/>
    <property type="project" value="GO_Central"/>
</dbReference>
<dbReference type="GO" id="GO:0005634">
    <property type="term" value="C:nucleus"/>
    <property type="evidence" value="ECO:0007669"/>
    <property type="project" value="UniProtKB-SubCell"/>
</dbReference>
<dbReference type="GO" id="GO:0004869">
    <property type="term" value="F:cysteine-type endopeptidase inhibitor activity"/>
    <property type="evidence" value="ECO:0000318"/>
    <property type="project" value="GO_Central"/>
</dbReference>
<dbReference type="CDD" id="cd00042">
    <property type="entry name" value="CY"/>
    <property type="match status" value="1"/>
</dbReference>
<dbReference type="FunFam" id="3.10.450.10:FF:000001">
    <property type="entry name" value="Cystatin-A"/>
    <property type="match status" value="1"/>
</dbReference>
<dbReference type="Gene3D" id="3.10.450.10">
    <property type="match status" value="1"/>
</dbReference>
<dbReference type="InterPro" id="IPR000010">
    <property type="entry name" value="Cystatin_dom"/>
</dbReference>
<dbReference type="InterPro" id="IPR046350">
    <property type="entry name" value="Cystatin_sf"/>
</dbReference>
<dbReference type="InterPro" id="IPR018073">
    <property type="entry name" value="Prot_inh_cystat_CS"/>
</dbReference>
<dbReference type="InterPro" id="IPR001713">
    <property type="entry name" value="Prot_inh_stefin"/>
</dbReference>
<dbReference type="PANTHER" id="PTHR11414">
    <property type="entry name" value="CYSTATIN FAMILY MEMBER"/>
    <property type="match status" value="1"/>
</dbReference>
<dbReference type="PANTHER" id="PTHR11414:SF22">
    <property type="entry name" value="CYSTATIN-B"/>
    <property type="match status" value="1"/>
</dbReference>
<dbReference type="Pfam" id="PF00031">
    <property type="entry name" value="Cystatin"/>
    <property type="match status" value="1"/>
</dbReference>
<dbReference type="PRINTS" id="PR00295">
    <property type="entry name" value="STEFINA"/>
</dbReference>
<dbReference type="SMART" id="SM00043">
    <property type="entry name" value="CY"/>
    <property type="match status" value="1"/>
</dbReference>
<dbReference type="SUPFAM" id="SSF54403">
    <property type="entry name" value="Cystatin/monellin"/>
    <property type="match status" value="1"/>
</dbReference>
<dbReference type="PROSITE" id="PS00287">
    <property type="entry name" value="CYSTATIN"/>
    <property type="match status" value="1"/>
</dbReference>